<feature type="chain" id="PRO_1000188786" description="Cyclic 2,3-diphosphoglycerate synthetase">
    <location>
        <begin position="1"/>
        <end position="432"/>
    </location>
</feature>
<gene>
    <name evidence="1" type="primary">cpgS</name>
    <name type="ordered locus">TON_0743</name>
</gene>
<organism>
    <name type="scientific">Thermococcus onnurineus (strain NA1)</name>
    <dbReference type="NCBI Taxonomy" id="523850"/>
    <lineage>
        <taxon>Archaea</taxon>
        <taxon>Methanobacteriati</taxon>
        <taxon>Methanobacteriota</taxon>
        <taxon>Thermococci</taxon>
        <taxon>Thermococcales</taxon>
        <taxon>Thermococcaceae</taxon>
        <taxon>Thermococcus</taxon>
    </lineage>
</organism>
<proteinExistence type="inferred from homology"/>
<sequence length="432" mass="47469">MKLVLIDGEHYPDVISWAIKKLGDVCCAVFLGGSEKIGSIGEVERKIGVKVYHSPNYLDALRRALEENKVDEVVDLSDEPVLNYEDRFRIASLCMLYGVSYRGADFHFKPKPLKKTKKPSLAVIGTGKRVGKTAVSGFIARTLKEIAKPVIVTMGRGGPEEPELIEGDKFEITPEFLLKFAESGKHAASDHFEDALTSRVTTIGCRRCGGGMAGFPFFDVVDEGVKLAENLPNDLIILEGSGATFPPYRADRYVVVVGAKQKLDFVRGYFGTFRVSLADIVVVTMADSVGEERWKALRDAILEINPDVDLHFIAFRPRPLGNVSDKRLGLVMTSSEALPKAKKHLEGLGAEVPYTSDNLSKRPLLWRDLEGFRGIDAVAVELKAAAVDVVTRWALEQGIEVIYLDNEPVNIDGKDLRKAVLELGRALLGGRA</sequence>
<keyword id="KW-0067">ATP-binding</keyword>
<keyword id="KW-0963">Cytoplasm</keyword>
<keyword id="KW-0436">Ligase</keyword>
<keyword id="KW-0547">Nucleotide-binding</keyword>
<name>CPGS_THEON</name>
<accession>B6YVF3</accession>
<reference key="1">
    <citation type="journal article" date="2008" name="J. Bacteriol.">
        <title>The complete genome sequence of Thermococcus onnurineus NA1 reveals a mixed heterotrophic and carboxydotrophic metabolism.</title>
        <authorList>
            <person name="Lee H.S."/>
            <person name="Kang S.G."/>
            <person name="Bae S.S."/>
            <person name="Lim J.K."/>
            <person name="Cho Y."/>
            <person name="Kim Y.J."/>
            <person name="Jeon J.H."/>
            <person name="Cha S.-S."/>
            <person name="Kwon K.K."/>
            <person name="Kim H.-T."/>
            <person name="Park C.-J."/>
            <person name="Lee H.-W."/>
            <person name="Kim S.I."/>
            <person name="Chun J."/>
            <person name="Colwell R.R."/>
            <person name="Kim S.-J."/>
            <person name="Lee J.-H."/>
        </authorList>
    </citation>
    <scope>NUCLEOTIDE SEQUENCE [LARGE SCALE GENOMIC DNA]</scope>
    <source>
        <strain>NA1</strain>
    </source>
</reference>
<comment type="function">
    <text evidence="1">Catalyzes the formation of cyclic 2,3-diphosphoglycerate (cDPG) by formation of an intramolecular phosphoanhydride bond at the expense of ATP.</text>
</comment>
<comment type="catalytic activity">
    <reaction evidence="1">
        <text>(2R)-2,3-bisphosphoglycerate + ATP + H(+) = cyclic (2R)-2,3-bisphosphoglycerate + ADP + phosphate</text>
        <dbReference type="Rhea" id="RHEA:42412"/>
        <dbReference type="ChEBI" id="CHEBI:15378"/>
        <dbReference type="ChEBI" id="CHEBI:30616"/>
        <dbReference type="ChEBI" id="CHEBI:43474"/>
        <dbReference type="ChEBI" id="CHEBI:58248"/>
        <dbReference type="ChEBI" id="CHEBI:79081"/>
        <dbReference type="ChEBI" id="CHEBI:456216"/>
        <dbReference type="EC" id="6.5.1.9"/>
    </reaction>
</comment>
<comment type="subcellular location">
    <subcellularLocation>
        <location evidence="1">Cytoplasm</location>
    </subcellularLocation>
</comment>
<comment type="similarity">
    <text evidence="1">Belongs to the cyclic 2,3-diphosphoglycerate synthetase family.</text>
</comment>
<evidence type="ECO:0000255" key="1">
    <source>
        <dbReference type="HAMAP-Rule" id="MF_01908"/>
    </source>
</evidence>
<dbReference type="EC" id="6.5.1.9" evidence="1"/>
<dbReference type="EMBL" id="CP000855">
    <property type="protein sequence ID" value="ACJ16231.1"/>
    <property type="molecule type" value="Genomic_DNA"/>
</dbReference>
<dbReference type="RefSeq" id="WP_012571703.1">
    <property type="nucleotide sequence ID" value="NC_011529.1"/>
</dbReference>
<dbReference type="SMR" id="B6YVF3"/>
<dbReference type="STRING" id="523850.TON_0743"/>
<dbReference type="GeneID" id="7017045"/>
<dbReference type="KEGG" id="ton:TON_0743"/>
<dbReference type="PATRIC" id="fig|523850.10.peg.746"/>
<dbReference type="eggNOG" id="arCOG01230">
    <property type="taxonomic scope" value="Archaea"/>
</dbReference>
<dbReference type="HOGENOM" id="CLU_638764_0_0_2"/>
<dbReference type="OrthoDB" id="85545at2157"/>
<dbReference type="Proteomes" id="UP000002727">
    <property type="component" value="Chromosome"/>
</dbReference>
<dbReference type="GO" id="GO:0005737">
    <property type="term" value="C:cytoplasm"/>
    <property type="evidence" value="ECO:0007669"/>
    <property type="project" value="UniProtKB-SubCell"/>
</dbReference>
<dbReference type="GO" id="GO:0005524">
    <property type="term" value="F:ATP binding"/>
    <property type="evidence" value="ECO:0007669"/>
    <property type="project" value="UniProtKB-KW"/>
</dbReference>
<dbReference type="GO" id="GO:0036356">
    <property type="term" value="F:cyclic 2,3-diphosphoglycerate synthetase activity"/>
    <property type="evidence" value="ECO:0007669"/>
    <property type="project" value="InterPro"/>
</dbReference>
<dbReference type="GO" id="GO:0016874">
    <property type="term" value="F:ligase activity"/>
    <property type="evidence" value="ECO:0007669"/>
    <property type="project" value="UniProtKB-UniRule"/>
</dbReference>
<dbReference type="GO" id="GO:0006094">
    <property type="term" value="P:gluconeogenesis"/>
    <property type="evidence" value="ECO:0007669"/>
    <property type="project" value="InterPro"/>
</dbReference>
<dbReference type="Gene3D" id="3.40.50.300">
    <property type="entry name" value="P-loop containing nucleotide triphosphate hydrolases"/>
    <property type="match status" value="1"/>
</dbReference>
<dbReference type="HAMAP" id="MF_01908">
    <property type="entry name" value="Cyc_PG_syn"/>
    <property type="match status" value="1"/>
</dbReference>
<dbReference type="InterPro" id="IPR016557">
    <property type="entry name" value="Cyc_diphosphoglycerate_synth"/>
</dbReference>
<dbReference type="InterPro" id="IPR027417">
    <property type="entry name" value="P-loop_NTPase"/>
</dbReference>
<dbReference type="PIRSF" id="PIRSF009445">
    <property type="entry name" value="Cyc_PG_syn"/>
    <property type="match status" value="1"/>
</dbReference>
<protein>
    <recommendedName>
        <fullName evidence="1">Cyclic 2,3-diphosphoglycerate synthetase</fullName>
        <shortName evidence="1">cDPGS</shortName>
        <ecNumber evidence="1">6.5.1.9</ecNumber>
    </recommendedName>
</protein>